<sequence length="109" mass="12162">MRKQVLALSDTAAARIRQLLQHQQKPFLRLAVEAKGCNGLSYVLNYAQEKGKFDEVVEEKGVKILVDPKAVMHVIGTEMDFVDDKLRSEFVFVNPNATKCGCGESFTTT</sequence>
<organism>
    <name type="scientific">Arabidopsis thaliana</name>
    <name type="common">Mouse-ear cress</name>
    <dbReference type="NCBI Taxonomy" id="3702"/>
    <lineage>
        <taxon>Eukaryota</taxon>
        <taxon>Viridiplantae</taxon>
        <taxon>Streptophyta</taxon>
        <taxon>Embryophyta</taxon>
        <taxon>Tracheophyta</taxon>
        <taxon>Spermatophyta</taxon>
        <taxon>Magnoliopsida</taxon>
        <taxon>eudicotyledons</taxon>
        <taxon>Gunneridae</taxon>
        <taxon>Pentapetalae</taxon>
        <taxon>rosids</taxon>
        <taxon>malvids</taxon>
        <taxon>Brassicales</taxon>
        <taxon>Brassicaceae</taxon>
        <taxon>Camelineae</taxon>
        <taxon>Arabidopsis</taxon>
    </lineage>
</organism>
<evidence type="ECO:0000250" key="1"/>
<evidence type="ECO:0000250" key="2">
    <source>
        <dbReference type="UniProtKB" id="P0AAC8"/>
    </source>
</evidence>
<evidence type="ECO:0000255" key="3"/>
<evidence type="ECO:0000305" key="4"/>
<feature type="transit peptide" description="Mitochondrion" evidence="3">
    <location>
        <begin position="1"/>
        <end position="18"/>
    </location>
</feature>
<feature type="chain" id="PRO_0000223686" description="Iron-sulfur assembly protein IscA-like 3, mitochondrial">
    <location>
        <begin position="19"/>
        <end position="109"/>
    </location>
</feature>
<feature type="binding site" evidence="2">
    <location>
        <position position="37"/>
    </location>
    <ligand>
        <name>Fe cation</name>
        <dbReference type="ChEBI" id="CHEBI:24875"/>
    </ligand>
</feature>
<feature type="binding site" evidence="2">
    <location>
        <position position="100"/>
    </location>
    <ligand>
        <name>Fe cation</name>
        <dbReference type="ChEBI" id="CHEBI:24875"/>
    </ligand>
</feature>
<feature type="binding site" evidence="2">
    <location>
        <position position="102"/>
    </location>
    <ligand>
        <name>Fe cation</name>
        <dbReference type="ChEBI" id="CHEBI:24875"/>
    </ligand>
</feature>
<accession>Q8L8C0</accession>
<accession>Q9SJN1</accession>
<name>ISAM3_ARATH</name>
<gene>
    <name type="ordered locus">At2g36260</name>
    <name type="ORF">F2H17.13</name>
</gene>
<proteinExistence type="inferred from homology"/>
<reference key="1">
    <citation type="journal article" date="1999" name="Nature">
        <title>Sequence and analysis of chromosome 2 of the plant Arabidopsis thaliana.</title>
        <authorList>
            <person name="Lin X."/>
            <person name="Kaul S."/>
            <person name="Rounsley S.D."/>
            <person name="Shea T.P."/>
            <person name="Benito M.-I."/>
            <person name="Town C.D."/>
            <person name="Fujii C.Y."/>
            <person name="Mason T.M."/>
            <person name="Bowman C.L."/>
            <person name="Barnstead M.E."/>
            <person name="Feldblyum T.V."/>
            <person name="Buell C.R."/>
            <person name="Ketchum K.A."/>
            <person name="Lee J.J."/>
            <person name="Ronning C.M."/>
            <person name="Koo H.L."/>
            <person name="Moffat K.S."/>
            <person name="Cronin L.A."/>
            <person name="Shen M."/>
            <person name="Pai G."/>
            <person name="Van Aken S."/>
            <person name="Umayam L."/>
            <person name="Tallon L.J."/>
            <person name="Gill J.E."/>
            <person name="Adams M.D."/>
            <person name="Carrera A.J."/>
            <person name="Creasy T.H."/>
            <person name="Goodman H.M."/>
            <person name="Somerville C.R."/>
            <person name="Copenhaver G.P."/>
            <person name="Preuss D."/>
            <person name="Nierman W.C."/>
            <person name="White O."/>
            <person name="Eisen J.A."/>
            <person name="Salzberg S.L."/>
            <person name="Fraser C.M."/>
            <person name="Venter J.C."/>
        </authorList>
    </citation>
    <scope>NUCLEOTIDE SEQUENCE [LARGE SCALE GENOMIC DNA]</scope>
    <source>
        <strain>cv. Columbia</strain>
    </source>
</reference>
<reference key="2">
    <citation type="journal article" date="2017" name="Plant J.">
        <title>Araport11: a complete reannotation of the Arabidopsis thaliana reference genome.</title>
        <authorList>
            <person name="Cheng C.Y."/>
            <person name="Krishnakumar V."/>
            <person name="Chan A.P."/>
            <person name="Thibaud-Nissen F."/>
            <person name="Schobel S."/>
            <person name="Town C.D."/>
        </authorList>
    </citation>
    <scope>GENOME REANNOTATION</scope>
    <source>
        <strain>cv. Columbia</strain>
    </source>
</reference>
<reference key="3">
    <citation type="journal article" date="2002" name="Plant Physiol.">
        <title>Cloning and sequencing of cDNAs for hypothetical genes from chromosome 2 of Arabidopsis.</title>
        <authorList>
            <person name="Xiao Y.-L."/>
            <person name="Malik M."/>
            <person name="Whitelaw C.A."/>
            <person name="Town C.D."/>
        </authorList>
    </citation>
    <scope>NUCLEOTIDE SEQUENCE [LARGE SCALE MRNA]</scope>
    <source>
        <strain>cv. Columbia</strain>
    </source>
</reference>
<reference key="4">
    <citation type="journal article" date="2005" name="Plant Physiol.">
        <title>Analysis of the cDNAs of hypothetical genes on Arabidopsis chromosome 2 reveals numerous transcript variants.</title>
        <authorList>
            <person name="Xiao Y.-L."/>
            <person name="Smith S.R."/>
            <person name="Ishmael N."/>
            <person name="Redman J.C."/>
            <person name="Kumar N."/>
            <person name="Monaghan E.L."/>
            <person name="Ayele M."/>
            <person name="Haas B.J."/>
            <person name="Wu H.C."/>
            <person name="Town C.D."/>
        </authorList>
    </citation>
    <scope>NUCLEOTIDE SEQUENCE [LARGE SCALE MRNA]</scope>
    <source>
        <strain>cv. Columbia</strain>
    </source>
</reference>
<reference key="5">
    <citation type="submission" date="2004-10" db="EMBL/GenBank/DDBJ databases">
        <authorList>
            <person name="Underwood B.A."/>
            <person name="Xiao Y.-L."/>
            <person name="Moskal W.A. Jr."/>
            <person name="Monaghan E.L."/>
            <person name="Wang W."/>
            <person name="Redman J.C."/>
            <person name="Wu H.C."/>
            <person name="Utterback T."/>
            <person name="Town C.D."/>
        </authorList>
    </citation>
    <scope>NUCLEOTIDE SEQUENCE [LARGE SCALE MRNA]</scope>
    <source>
        <strain>cv. Columbia</strain>
    </source>
</reference>
<keyword id="KW-0408">Iron</keyword>
<keyword id="KW-0411">Iron-sulfur</keyword>
<keyword id="KW-0479">Metal-binding</keyword>
<keyword id="KW-0496">Mitochondrion</keyword>
<keyword id="KW-1185">Reference proteome</keyword>
<keyword id="KW-0809">Transit peptide</keyword>
<dbReference type="EMBL" id="AC006921">
    <property type="protein sequence ID" value="AAD21439.1"/>
    <property type="molecule type" value="Genomic_DNA"/>
</dbReference>
<dbReference type="EMBL" id="CP002685">
    <property type="protein sequence ID" value="AEC09224.1"/>
    <property type="molecule type" value="Genomic_DNA"/>
</dbReference>
<dbReference type="EMBL" id="AY102552">
    <property type="protein sequence ID" value="AAM76757.1"/>
    <property type="molecule type" value="mRNA"/>
</dbReference>
<dbReference type="EMBL" id="AY773862">
    <property type="protein sequence ID" value="AAV63891.1"/>
    <property type="molecule type" value="mRNA"/>
</dbReference>
<dbReference type="PIR" id="F84778">
    <property type="entry name" value="F84778"/>
</dbReference>
<dbReference type="RefSeq" id="NP_181168.1">
    <property type="nucleotide sequence ID" value="NM_129184.3"/>
</dbReference>
<dbReference type="SMR" id="Q8L8C0"/>
<dbReference type="FunCoup" id="Q8L8C0">
    <property type="interactions" value="1250"/>
</dbReference>
<dbReference type="STRING" id="3702.Q8L8C0"/>
<dbReference type="PaxDb" id="3702-AT2G36260.1"/>
<dbReference type="ProteomicsDB" id="247297"/>
<dbReference type="EnsemblPlants" id="AT2G36260.1">
    <property type="protein sequence ID" value="AT2G36260.1"/>
    <property type="gene ID" value="AT2G36260"/>
</dbReference>
<dbReference type="GeneID" id="818198"/>
<dbReference type="Gramene" id="AT2G36260.1">
    <property type="protein sequence ID" value="AT2G36260.1"/>
    <property type="gene ID" value="AT2G36260"/>
</dbReference>
<dbReference type="KEGG" id="ath:AT2G36260"/>
<dbReference type="Araport" id="AT2G36260"/>
<dbReference type="TAIR" id="AT2G36260"/>
<dbReference type="eggNOG" id="KOG1120">
    <property type="taxonomic scope" value="Eukaryota"/>
</dbReference>
<dbReference type="HOGENOM" id="CLU_069054_4_2_1"/>
<dbReference type="InParanoid" id="Q8L8C0"/>
<dbReference type="OMA" id="IRNSSHC"/>
<dbReference type="PhylomeDB" id="Q8L8C0"/>
<dbReference type="PRO" id="PR:Q8L8C0"/>
<dbReference type="Proteomes" id="UP000006548">
    <property type="component" value="Chromosome 2"/>
</dbReference>
<dbReference type="ExpressionAtlas" id="Q8L8C0">
    <property type="expression patterns" value="baseline"/>
</dbReference>
<dbReference type="GO" id="GO:0005739">
    <property type="term" value="C:mitochondrion"/>
    <property type="evidence" value="ECO:0007669"/>
    <property type="project" value="UniProtKB-SubCell"/>
</dbReference>
<dbReference type="GO" id="GO:0051536">
    <property type="term" value="F:iron-sulfur cluster binding"/>
    <property type="evidence" value="ECO:0007669"/>
    <property type="project" value="UniProtKB-KW"/>
</dbReference>
<dbReference type="GO" id="GO:0046872">
    <property type="term" value="F:metal ion binding"/>
    <property type="evidence" value="ECO:0007669"/>
    <property type="project" value="UniProtKB-KW"/>
</dbReference>
<dbReference type="GO" id="GO:0016226">
    <property type="term" value="P:iron-sulfur cluster assembly"/>
    <property type="evidence" value="ECO:0007669"/>
    <property type="project" value="InterPro"/>
</dbReference>
<dbReference type="FunFam" id="2.60.300.12:FF:000001">
    <property type="entry name" value="Iron-binding protein IscA"/>
    <property type="match status" value="1"/>
</dbReference>
<dbReference type="Gene3D" id="2.60.300.12">
    <property type="entry name" value="HesB-like domain"/>
    <property type="match status" value="1"/>
</dbReference>
<dbReference type="InterPro" id="IPR050322">
    <property type="entry name" value="Fe-S_cluster_asmbl/transfer"/>
</dbReference>
<dbReference type="InterPro" id="IPR000361">
    <property type="entry name" value="FeS_biogenesis"/>
</dbReference>
<dbReference type="InterPro" id="IPR016092">
    <property type="entry name" value="FeS_cluster_insertion"/>
</dbReference>
<dbReference type="InterPro" id="IPR035903">
    <property type="entry name" value="HesB-like_dom_sf"/>
</dbReference>
<dbReference type="NCBIfam" id="TIGR00049">
    <property type="entry name" value="iron-sulfur cluster assembly accessory protein"/>
    <property type="match status" value="1"/>
</dbReference>
<dbReference type="PANTHER" id="PTHR10072:SF60">
    <property type="entry name" value="IRON-SULFUR ASSEMBLY PROTEIN ISCA-LIKE 3, MITOCHONDRIAL"/>
    <property type="match status" value="1"/>
</dbReference>
<dbReference type="PANTHER" id="PTHR10072">
    <property type="entry name" value="IRON-SULFUR CLUSTER ASSEMBLY PROTEIN"/>
    <property type="match status" value="1"/>
</dbReference>
<dbReference type="Pfam" id="PF01521">
    <property type="entry name" value="Fe-S_biosyn"/>
    <property type="match status" value="1"/>
</dbReference>
<dbReference type="SUPFAM" id="SSF89360">
    <property type="entry name" value="HesB-like domain"/>
    <property type="match status" value="1"/>
</dbReference>
<protein>
    <recommendedName>
        <fullName>Iron-sulfur assembly protein IscA-like 3, mitochondrial</fullName>
    </recommendedName>
</protein>
<comment type="function">
    <text evidence="1">Involved in the assembly of mitochondrial iron-sulfur proteins. Probably involved in the binding of an intermediate of Fe/S cluster assembly (By similarity).</text>
</comment>
<comment type="cofactor">
    <cofactor evidence="1">
        <name>Fe cation</name>
        <dbReference type="ChEBI" id="CHEBI:24875"/>
    </cofactor>
    <text evidence="1">Binds 2 iron ions per dimer. The dimer may bind additional iron ions.</text>
</comment>
<comment type="subunit">
    <text evidence="1">Homodimer; may form tetramers and higher multimers.</text>
</comment>
<comment type="subcellular location">
    <subcellularLocation>
        <location evidence="4">Mitochondrion</location>
    </subcellularLocation>
</comment>
<comment type="similarity">
    <text evidence="4">Belongs to the HesB/IscA family.</text>
</comment>